<keyword id="KW-1185">Reference proteome</keyword>
<keyword id="KW-0687">Ribonucleoprotein</keyword>
<keyword id="KW-0689">Ribosomal protein</keyword>
<keyword id="KW-0694">RNA-binding</keyword>
<keyword id="KW-0699">rRNA-binding</keyword>
<protein>
    <recommendedName>
        <fullName evidence="1">Large ribosomal subunit protein bL25</fullName>
    </recommendedName>
    <alternativeName>
        <fullName evidence="2">50S ribosomal protein L25</fullName>
    </alternativeName>
</protein>
<evidence type="ECO:0000255" key="1">
    <source>
        <dbReference type="HAMAP-Rule" id="MF_01336"/>
    </source>
</evidence>
<evidence type="ECO:0000305" key="2"/>
<comment type="function">
    <text evidence="1">This is one of the proteins that binds to the 5S RNA in the ribosome where it forms part of the central protuberance.</text>
</comment>
<comment type="subunit">
    <text evidence="1">Part of the 50S ribosomal subunit; part of the 5S rRNA/L5/L18/L25 subcomplex. Contacts the 5S rRNA. Binds to the 5S rRNA independently of L5 and L18.</text>
</comment>
<comment type="similarity">
    <text evidence="1">Belongs to the bacterial ribosomal protein bL25 family.</text>
</comment>
<reference key="1">
    <citation type="journal article" date="2010" name="PLoS ONE">
        <title>Genome sequence of Cronobacter sakazakii BAA-894 and comparative genomic hybridization analysis with other Cronobacter species.</title>
        <authorList>
            <person name="Kucerova E."/>
            <person name="Clifton S.W."/>
            <person name="Xia X.Q."/>
            <person name="Long F."/>
            <person name="Porwollik S."/>
            <person name="Fulton L."/>
            <person name="Fronick C."/>
            <person name="Minx P."/>
            <person name="Kyung K."/>
            <person name="Warren W."/>
            <person name="Fulton R."/>
            <person name="Feng D."/>
            <person name="Wollam A."/>
            <person name="Shah N."/>
            <person name="Bhonagiri V."/>
            <person name="Nash W.E."/>
            <person name="Hallsworth-Pepin K."/>
            <person name="Wilson R.K."/>
            <person name="McClelland M."/>
            <person name="Forsythe S.J."/>
        </authorList>
    </citation>
    <scope>NUCLEOTIDE SEQUENCE [LARGE SCALE GENOMIC DNA]</scope>
    <source>
        <strain>ATCC BAA-894</strain>
    </source>
</reference>
<sequence length="94" mass="10695">MFTINAEVRKEQGKGASRRLRHANKFPAIVYGGTEAPVAIELDHDKVMNMQAKPEFYSEVLTLAIDGKEVKVKVQAVQRHPYKPKLHHIDFVRA</sequence>
<dbReference type="EMBL" id="CP000783">
    <property type="protein sequence ID" value="ABU76319.1"/>
    <property type="molecule type" value="Genomic_DNA"/>
</dbReference>
<dbReference type="RefSeq" id="WP_004387433.1">
    <property type="nucleotide sequence ID" value="NC_009778.1"/>
</dbReference>
<dbReference type="SMR" id="A7MLN0"/>
<dbReference type="GeneID" id="92212355"/>
<dbReference type="KEGG" id="esa:ESA_01051"/>
<dbReference type="HOGENOM" id="CLU_137946_0_0_6"/>
<dbReference type="Proteomes" id="UP000000260">
    <property type="component" value="Chromosome"/>
</dbReference>
<dbReference type="GO" id="GO:0022625">
    <property type="term" value="C:cytosolic large ribosomal subunit"/>
    <property type="evidence" value="ECO:0007669"/>
    <property type="project" value="TreeGrafter"/>
</dbReference>
<dbReference type="GO" id="GO:0008097">
    <property type="term" value="F:5S rRNA binding"/>
    <property type="evidence" value="ECO:0007669"/>
    <property type="project" value="InterPro"/>
</dbReference>
<dbReference type="GO" id="GO:0003735">
    <property type="term" value="F:structural constituent of ribosome"/>
    <property type="evidence" value="ECO:0007669"/>
    <property type="project" value="InterPro"/>
</dbReference>
<dbReference type="GO" id="GO:0006412">
    <property type="term" value="P:translation"/>
    <property type="evidence" value="ECO:0007669"/>
    <property type="project" value="UniProtKB-UniRule"/>
</dbReference>
<dbReference type="CDD" id="cd00495">
    <property type="entry name" value="Ribosomal_L25_TL5_CTC"/>
    <property type="match status" value="1"/>
</dbReference>
<dbReference type="FunFam" id="2.40.240.10:FF:000002">
    <property type="entry name" value="50S ribosomal protein L25"/>
    <property type="match status" value="1"/>
</dbReference>
<dbReference type="Gene3D" id="2.40.240.10">
    <property type="entry name" value="Ribosomal Protein L25, Chain P"/>
    <property type="match status" value="1"/>
</dbReference>
<dbReference type="HAMAP" id="MF_01336">
    <property type="entry name" value="Ribosomal_bL25"/>
    <property type="match status" value="1"/>
</dbReference>
<dbReference type="InterPro" id="IPR020056">
    <property type="entry name" value="Rbsml_bL25/Gln-tRNA_synth_N"/>
</dbReference>
<dbReference type="InterPro" id="IPR011035">
    <property type="entry name" value="Ribosomal_bL25/Gln-tRNA_synth"/>
</dbReference>
<dbReference type="InterPro" id="IPR020055">
    <property type="entry name" value="Ribosomal_bL25_short"/>
</dbReference>
<dbReference type="InterPro" id="IPR029751">
    <property type="entry name" value="Ribosomal_L25_dom"/>
</dbReference>
<dbReference type="InterPro" id="IPR020930">
    <property type="entry name" value="Ribosomal_uL5_bac-type"/>
</dbReference>
<dbReference type="NCBIfam" id="NF004612">
    <property type="entry name" value="PRK05943.1"/>
    <property type="match status" value="1"/>
</dbReference>
<dbReference type="PANTHER" id="PTHR33284">
    <property type="entry name" value="RIBOSOMAL PROTEIN L25/GLN-TRNA SYNTHETASE, ANTI-CODON-BINDING DOMAIN-CONTAINING PROTEIN"/>
    <property type="match status" value="1"/>
</dbReference>
<dbReference type="PANTHER" id="PTHR33284:SF1">
    <property type="entry name" value="RIBOSOMAL PROTEIN L25_GLN-TRNA SYNTHETASE, ANTI-CODON-BINDING DOMAIN-CONTAINING PROTEIN"/>
    <property type="match status" value="1"/>
</dbReference>
<dbReference type="Pfam" id="PF01386">
    <property type="entry name" value="Ribosomal_L25p"/>
    <property type="match status" value="1"/>
</dbReference>
<dbReference type="SUPFAM" id="SSF50715">
    <property type="entry name" value="Ribosomal protein L25-like"/>
    <property type="match status" value="1"/>
</dbReference>
<feature type="chain" id="PRO_1000052951" description="Large ribosomal subunit protein bL25">
    <location>
        <begin position="1"/>
        <end position="94"/>
    </location>
</feature>
<gene>
    <name evidence="1" type="primary">rplY</name>
    <name type="ordered locus">ESA_01051</name>
</gene>
<name>RL25_CROS8</name>
<accession>A7MLN0</accession>
<proteinExistence type="inferred from homology"/>
<organism>
    <name type="scientific">Cronobacter sakazakii (strain ATCC BAA-894)</name>
    <name type="common">Enterobacter sakazakii</name>
    <dbReference type="NCBI Taxonomy" id="290339"/>
    <lineage>
        <taxon>Bacteria</taxon>
        <taxon>Pseudomonadati</taxon>
        <taxon>Pseudomonadota</taxon>
        <taxon>Gammaproteobacteria</taxon>
        <taxon>Enterobacterales</taxon>
        <taxon>Enterobacteriaceae</taxon>
        <taxon>Cronobacter</taxon>
    </lineage>
</organism>